<organism>
    <name type="scientific">Xenopus laevis</name>
    <name type="common">African clawed frog</name>
    <dbReference type="NCBI Taxonomy" id="8355"/>
    <lineage>
        <taxon>Eukaryota</taxon>
        <taxon>Metazoa</taxon>
        <taxon>Chordata</taxon>
        <taxon>Craniata</taxon>
        <taxon>Vertebrata</taxon>
        <taxon>Euteleostomi</taxon>
        <taxon>Amphibia</taxon>
        <taxon>Batrachia</taxon>
        <taxon>Anura</taxon>
        <taxon>Pipoidea</taxon>
        <taxon>Pipidae</taxon>
        <taxon>Xenopodinae</taxon>
        <taxon>Xenopus</taxon>
        <taxon>Xenopus</taxon>
    </lineage>
</organism>
<reference key="1">
    <citation type="submission" date="2003-02" db="EMBL/GenBank/DDBJ databases">
        <authorList>
            <consortium name="NIH - Xenopus Gene Collection (XGC) project"/>
        </authorList>
    </citation>
    <scope>NUCLEOTIDE SEQUENCE [LARGE SCALE MRNA]</scope>
    <source>
        <tissue>Embryo</tissue>
    </source>
</reference>
<comment type="function">
    <text evidence="1 2">May act as a calcium-independent, swelling-dependent volume-regulated anion channel (VRAC-swell) which plays a pivotal role in the process of regulatory volume decrease (RVD) in the brain through the efflux of anions like chloride and organic osmolytes like glutamate. Probable large-conductance Ca(2+)-activated chloride channel.</text>
</comment>
<comment type="catalytic activity">
    <reaction evidence="1">
        <text>chloride(in) = chloride(out)</text>
        <dbReference type="Rhea" id="RHEA:29823"/>
        <dbReference type="ChEBI" id="CHEBI:17996"/>
    </reaction>
</comment>
<comment type="catalytic activity">
    <reaction evidence="1">
        <text>L-glutamate(out) = L-glutamate(in)</text>
        <dbReference type="Rhea" id="RHEA:66336"/>
        <dbReference type="ChEBI" id="CHEBI:29985"/>
    </reaction>
    <physiologicalReaction direction="right-to-left" evidence="1">
        <dbReference type="Rhea" id="RHEA:66338"/>
    </physiologicalReaction>
</comment>
<comment type="subunit">
    <text evidence="1">Forms cis-homodimers in the presence of Ca(+2) and forms monomers and trans-dimers in the absence of Ca(2+).</text>
</comment>
<comment type="subcellular location">
    <subcellularLocation>
        <location evidence="2">Cell membrane</location>
        <topology evidence="3">Multi-pass membrane protein</topology>
    </subcellularLocation>
</comment>
<comment type="similarity">
    <text evidence="4">Belongs to the tweety family.</text>
</comment>
<keyword id="KW-0106">Calcium</keyword>
<keyword id="KW-1003">Cell membrane</keyword>
<keyword id="KW-0868">Chloride</keyword>
<keyword id="KW-0869">Chloride channel</keyword>
<keyword id="KW-1015">Disulfide bond</keyword>
<keyword id="KW-0325">Glycoprotein</keyword>
<keyword id="KW-0407">Ion channel</keyword>
<keyword id="KW-0406">Ion transport</keyword>
<keyword id="KW-0472">Membrane</keyword>
<keyword id="KW-0479">Metal-binding</keyword>
<keyword id="KW-1185">Reference proteome</keyword>
<keyword id="KW-0812">Transmembrane</keyword>
<keyword id="KW-1133">Transmembrane helix</keyword>
<keyword id="KW-0813">Transport</keyword>
<proteinExistence type="evidence at transcript level"/>
<sequence>MATARVEYIAPWWVYWLHNLPHVDFSLQRESGDFNPKDPGYQQTLLFVALFIALCAAVNLLFVSGYLICLCCCKKEDETETKMTSSCCVTWTAAVSGLLCCAAVGIGFYGNSETNDGVYQLTYSLDNANHTLAGIDSLVSNTNAKMKEDLDQHLFRLNEIFAARGDYIQSLRFMQQMAGNIIQQLTSLPNWQGTSVNFSEIARNASIIEYYRWLSYLILFITDVVICLVTCLGLAKKSKCLLLTMLCCGLIALMLSWASLALETSSAVGTSDFCVAPDKFILNMTPDQITADVVHYYLYCSQSQRNPFQQALTVFQRSLTTMQIQIQGLLQFAVPLFPTAQKDLLGIQLLLNTSESNLHQITALLDCRGLHKDYLEALIGICYDGVEGLLYLSLFSLLAAVAFTAMVCAMPRAWKHLAARDRDYNDVDDEDPFNPQARRIAVHNPNRGQLRSFCSYSSSLGSQASLQPPAQTVSNAQAAEYMNQAALFGGNPRYENVPLIGRGSPPPTYSPTMRATYLSMNEESPNIYSNVFPA</sequence>
<dbReference type="EMBL" id="BC046859">
    <property type="protein sequence ID" value="AAH46859.1"/>
    <property type="molecule type" value="mRNA"/>
</dbReference>
<dbReference type="RefSeq" id="NP_001080592.1">
    <property type="nucleotide sequence ID" value="NM_001087123.1"/>
</dbReference>
<dbReference type="SMR" id="Q7ZWN9"/>
<dbReference type="GlyCosmos" id="Q7ZWN9">
    <property type="glycosylation" value="4 sites, No reported glycans"/>
</dbReference>
<dbReference type="DNASU" id="380284"/>
<dbReference type="GeneID" id="380284"/>
<dbReference type="KEGG" id="xla:380284"/>
<dbReference type="AGR" id="Xenbase:XB-GENE-866564"/>
<dbReference type="CTD" id="380284"/>
<dbReference type="Xenbase" id="XB-GENE-866564">
    <property type="gene designation" value="ttyh2.S"/>
</dbReference>
<dbReference type="OMA" id="MRATYMS"/>
<dbReference type="OrthoDB" id="187568at2759"/>
<dbReference type="Proteomes" id="UP000186698">
    <property type="component" value="Chromosome 9_10S"/>
</dbReference>
<dbReference type="Bgee" id="380284">
    <property type="expression patterns" value="Expressed in neurula embryo and 14 other cell types or tissues"/>
</dbReference>
<dbReference type="GO" id="GO:0034707">
    <property type="term" value="C:chloride channel complex"/>
    <property type="evidence" value="ECO:0007669"/>
    <property type="project" value="UniProtKB-KW"/>
</dbReference>
<dbReference type="GO" id="GO:0005886">
    <property type="term" value="C:plasma membrane"/>
    <property type="evidence" value="ECO:0000250"/>
    <property type="project" value="UniProtKB"/>
</dbReference>
<dbReference type="GO" id="GO:0005509">
    <property type="term" value="F:calcium ion binding"/>
    <property type="evidence" value="ECO:0000250"/>
    <property type="project" value="UniProtKB"/>
</dbReference>
<dbReference type="GO" id="GO:0005229">
    <property type="term" value="F:intracellularly calcium-gated chloride channel activity"/>
    <property type="evidence" value="ECO:0000318"/>
    <property type="project" value="GO_Central"/>
</dbReference>
<dbReference type="GO" id="GO:0072320">
    <property type="term" value="F:volume-sensitive chloride channel activity"/>
    <property type="evidence" value="ECO:0000250"/>
    <property type="project" value="UniProtKB"/>
</dbReference>
<dbReference type="GO" id="GO:0015813">
    <property type="term" value="P:L-glutamate transmembrane transport"/>
    <property type="evidence" value="ECO:0000250"/>
    <property type="project" value="UniProtKB"/>
</dbReference>
<dbReference type="CDD" id="cd07912">
    <property type="entry name" value="Tweety_N"/>
    <property type="match status" value="1"/>
</dbReference>
<dbReference type="InterPro" id="IPR006990">
    <property type="entry name" value="Tweety"/>
</dbReference>
<dbReference type="PANTHER" id="PTHR12424:SF6">
    <property type="entry name" value="PROTEIN TWEETY HOMOLOG 2"/>
    <property type="match status" value="1"/>
</dbReference>
<dbReference type="PANTHER" id="PTHR12424">
    <property type="entry name" value="TWEETY-RELATED"/>
    <property type="match status" value="1"/>
</dbReference>
<dbReference type="Pfam" id="PF04906">
    <property type="entry name" value="Tweety"/>
    <property type="match status" value="1"/>
</dbReference>
<gene>
    <name type="primary">ttyh2</name>
</gene>
<name>TTYH2_XENLA</name>
<protein>
    <recommendedName>
        <fullName>Protein tweety homolog 2</fullName>
    </recommendedName>
    <alternativeName>
        <fullName evidence="1">Volume-regulated anion channel subunit ttyh2</fullName>
    </alternativeName>
</protein>
<feature type="chain" id="PRO_0000312249" description="Protein tweety homolog 2">
    <location>
        <begin position="1"/>
        <end position="534"/>
    </location>
</feature>
<feature type="topological domain" description="Extracellular" evidence="3">
    <location>
        <begin position="1"/>
        <end position="44"/>
    </location>
</feature>
<feature type="transmembrane region" description="Helical; Name=1" evidence="3">
    <location>
        <begin position="45"/>
        <end position="65"/>
    </location>
</feature>
<feature type="topological domain" description="Cytoplasmic" evidence="3">
    <location>
        <begin position="66"/>
        <end position="87"/>
    </location>
</feature>
<feature type="transmembrane region" description="Helical; Name=2" evidence="3">
    <location>
        <begin position="88"/>
        <end position="108"/>
    </location>
</feature>
<feature type="topological domain" description="Extracellular" evidence="3">
    <location>
        <begin position="109"/>
        <end position="213"/>
    </location>
</feature>
<feature type="transmembrane region" description="Helical; Name=3" evidence="3">
    <location>
        <begin position="214"/>
        <end position="234"/>
    </location>
</feature>
<feature type="topological domain" description="Cytoplasmic" evidence="3">
    <location>
        <begin position="235"/>
        <end position="240"/>
    </location>
</feature>
<feature type="transmembrane region" description="Helical; Name=4" evidence="3">
    <location>
        <begin position="241"/>
        <end position="261"/>
    </location>
</feature>
<feature type="topological domain" description="Extracellular" evidence="3">
    <location>
        <begin position="262"/>
        <end position="388"/>
    </location>
</feature>
<feature type="transmembrane region" description="Helical; Name=5" evidence="3">
    <location>
        <begin position="389"/>
        <end position="409"/>
    </location>
</feature>
<feature type="topological domain" description="Cytoplasmic" evidence="3">
    <location>
        <begin position="410"/>
        <end position="534"/>
    </location>
</feature>
<feature type="short sequence motif" description="RGD" evidence="1">
    <location>
        <begin position="164"/>
        <end position="166"/>
    </location>
</feature>
<feature type="binding site" evidence="1">
    <location>
        <position position="113"/>
    </location>
    <ligand>
        <name>Ca(2+)</name>
        <dbReference type="ChEBI" id="CHEBI:29108"/>
    </ligand>
</feature>
<feature type="binding site" evidence="1">
    <location>
        <position position="116"/>
    </location>
    <ligand>
        <name>Ca(2+)</name>
        <dbReference type="ChEBI" id="CHEBI:29108"/>
    </ligand>
</feature>
<feature type="site" description="Essential for the formation of the channel-pore" evidence="1">
    <location>
        <position position="164"/>
    </location>
</feature>
<feature type="glycosylation site" description="N-linked (GlcNAc...) asparagine" evidence="3">
    <location>
        <position position="129"/>
    </location>
</feature>
<feature type="glycosylation site" description="N-linked (GlcNAc...) asparagine" evidence="3">
    <location>
        <position position="197"/>
    </location>
</feature>
<feature type="glycosylation site" description="N-linked (GlcNAc...) asparagine" evidence="3">
    <location>
        <position position="204"/>
    </location>
</feature>
<feature type="glycosylation site" description="N-linked (GlcNAc...) asparagine" evidence="3">
    <location>
        <position position="352"/>
    </location>
</feature>
<feature type="disulfide bond" evidence="2">
    <location>
        <begin position="274"/>
        <end position="382"/>
    </location>
</feature>
<feature type="disulfide bond" evidence="2">
    <location>
        <begin position="300"/>
        <end position="367"/>
    </location>
</feature>
<evidence type="ECO:0000250" key="1">
    <source>
        <dbReference type="UniProtKB" id="Q3TH73"/>
    </source>
</evidence>
<evidence type="ECO:0000250" key="2">
    <source>
        <dbReference type="UniProtKB" id="Q9BSA4"/>
    </source>
</evidence>
<evidence type="ECO:0000255" key="3"/>
<evidence type="ECO:0000305" key="4"/>
<accession>Q7ZWN9</accession>